<comment type="function">
    <text evidence="1">DNA-dependent RNA polymerase catalyzes the transcription of DNA into RNA using the four ribonucleoside triphosphates as substrates.</text>
</comment>
<comment type="catalytic activity">
    <reaction evidence="1">
        <text>RNA(n) + a ribonucleoside 5'-triphosphate = RNA(n+1) + diphosphate</text>
        <dbReference type="Rhea" id="RHEA:21248"/>
        <dbReference type="Rhea" id="RHEA-COMP:14527"/>
        <dbReference type="Rhea" id="RHEA-COMP:17342"/>
        <dbReference type="ChEBI" id="CHEBI:33019"/>
        <dbReference type="ChEBI" id="CHEBI:61557"/>
        <dbReference type="ChEBI" id="CHEBI:140395"/>
        <dbReference type="EC" id="2.7.7.6"/>
    </reaction>
</comment>
<comment type="cofactor">
    <cofactor evidence="1">
        <name>Mg(2+)</name>
        <dbReference type="ChEBI" id="CHEBI:18420"/>
    </cofactor>
    <text evidence="1">Binds 1 Mg(2+) ion per subunit.</text>
</comment>
<comment type="cofactor">
    <cofactor evidence="1">
        <name>Zn(2+)</name>
        <dbReference type="ChEBI" id="CHEBI:29105"/>
    </cofactor>
    <text evidence="1">Binds 2 Zn(2+) ions per subunit.</text>
</comment>
<comment type="subunit">
    <text evidence="1">The RNAP catalytic core consists of 2 alpha, 1 beta, 1 beta' and 1 omega subunit. When a sigma factor is associated with the core the holoenzyme is formed, which can initiate transcription.</text>
</comment>
<comment type="similarity">
    <text evidence="1">Belongs to the RNA polymerase beta' chain family.</text>
</comment>
<evidence type="ECO:0000255" key="1">
    <source>
        <dbReference type="HAMAP-Rule" id="MF_01322"/>
    </source>
</evidence>
<evidence type="ECO:0000256" key="2">
    <source>
        <dbReference type="SAM" id="MobiDB-lite"/>
    </source>
</evidence>
<reference key="1">
    <citation type="journal article" date="2010" name="Genome Biol. Evol.">
        <title>Continuing evolution of Burkholderia mallei through genome reduction and large-scale rearrangements.</title>
        <authorList>
            <person name="Losada L."/>
            <person name="Ronning C.M."/>
            <person name="DeShazer D."/>
            <person name="Woods D."/>
            <person name="Fedorova N."/>
            <person name="Kim H.S."/>
            <person name="Shabalina S.A."/>
            <person name="Pearson T.R."/>
            <person name="Brinkac L."/>
            <person name="Tan P."/>
            <person name="Nandi T."/>
            <person name="Crabtree J."/>
            <person name="Badger J."/>
            <person name="Beckstrom-Sternberg S."/>
            <person name="Saqib M."/>
            <person name="Schutzer S.E."/>
            <person name="Keim P."/>
            <person name="Nierman W.C."/>
        </authorList>
    </citation>
    <scope>NUCLEOTIDE SEQUENCE [LARGE SCALE GENOMIC DNA]</scope>
    <source>
        <strain>NCTC 10229</strain>
    </source>
</reference>
<accession>A2S7G7</accession>
<name>RPOC_BURM9</name>
<sequence length="1412" mass="155934">MKALLDLFKQVQQEEIFDAIKIGLASPDKIRSWSFGEVKKPETINYRTFKPERDGLFCAKIFGPIKDYECLCGKYKRLKHRGVICEKCGVEVTLAKVRRERMGHIELASPVAHIWFLKSLPSRLGMVLDMTLRDIERVLYFEAYVVIDPGMTPLKARQIMTEEDYYNKVEEYGDEFRAEMGAEGVRELLRSINIDEQVETLRTELKNTGSEAKIKKYAKRLKVLEAFQRSGIKPDWMILEVLPVLPPELRPLVPLDGGRFATSDLNDLYRRVINRNNRLKRLLELKAPEIIVRNEKRMLQEAVDSLLDNGRRGKAMTGANKRPLKSLADMIKGKGGRFRQNLLGKRVDYSGRSVIVVGPTLKLHQCGLPKLMALELFKPFIFNKLEVMGVATTIKAAKKEVENQTPVVWDILEEVIREHPVMLNRAPTLHRLGIQAFEPVLIEGKAIQLHPLVCAAFNADFDGDQMAVHVPLSLEAQMEARTLMLASNNVLFPANGDPSIVPSQDIVLGLYYATREAINGKGEGLSFTGVSEVIRAYENKEVELASRVNVRITEMVRNEDTSEGAPQFVPKISLYATTVGRAILSEILPPGLPFSVLNKPLKKKEISRLINTAFRKCGLRATVVFADQLMQSGFRLATRAGISICVDDMLVPTQKETIVGDAAKKVKEYDRQYMSGLVTAQERYNNVVDIWSATSEAVGKAMMEQLSTEPVIDRGGNETRQESFNSIYMMADSGARGSAVQIRQLAGMRGLMAKPDGSIIETPITANFREGLNVLQYFISTHGARKGLADTALKTANSGYLTRRLVDVTQDLVVVEDDCGTSNGVAMKALVEGGEVVEALRDRILGRVAASDVVNPETQETLYEAGALLDETAVEDIERLGIDEVRVRTALTCETRYGLCASCYGRDLGRGSLVNVGEAVGVIAAQSIGEPGTQLTMRTFHIGGAASRAAVASSVEAKSNGTVRFTASMRYVTNAKGEQIVISRSGEALITDDIGRERERHKIPYGATLLQLDGAAIKAGTQLATWDPLTRPIITEYGGTVKFENVEEGVTVAKQIDDVTGLSTLVVIDVKRRGSQAAKSVRPQVKLLDANGDEVKIPGTEHAVQIGFQVGALITVKDGQQVQVGEVLARIPTESQKTRDITGGLPRVAELFEARSPKDAGILAEVTGTVSFGKDTKGKQRLVITDLEGNQHEFLIAKEKQVLVHDGQVVNKGEMIVDGPADPHDILRLQGIEALSRYIVDEVQDVYRLQGVKINDKHIEVIVRQMLRRVQIVDNGDTRFIPGEQVERSDMLDENDRMIAEDKRPATYDNILLGITKASLSTDSFISAASFQETTRVLTEAAIMGKRDDLRGLKENVIVGRLIPAGTGLAFHKARKAKEQSDRERFDQIAAEEAFEFGTPSAPAEEPQHPAE</sequence>
<organism>
    <name type="scientific">Burkholderia mallei (strain NCTC 10229)</name>
    <dbReference type="NCBI Taxonomy" id="412022"/>
    <lineage>
        <taxon>Bacteria</taxon>
        <taxon>Pseudomonadati</taxon>
        <taxon>Pseudomonadota</taxon>
        <taxon>Betaproteobacteria</taxon>
        <taxon>Burkholderiales</taxon>
        <taxon>Burkholderiaceae</taxon>
        <taxon>Burkholderia</taxon>
        <taxon>pseudomallei group</taxon>
    </lineage>
</organism>
<feature type="chain" id="PRO_0000353309" description="DNA-directed RNA polymerase subunit beta'">
    <location>
        <begin position="1"/>
        <end position="1412"/>
    </location>
</feature>
<feature type="region of interest" description="Disordered" evidence="2">
    <location>
        <begin position="1393"/>
        <end position="1412"/>
    </location>
</feature>
<feature type="binding site" evidence="1">
    <location>
        <position position="70"/>
    </location>
    <ligand>
        <name>Zn(2+)</name>
        <dbReference type="ChEBI" id="CHEBI:29105"/>
        <label>1</label>
    </ligand>
</feature>
<feature type="binding site" evidence="1">
    <location>
        <position position="72"/>
    </location>
    <ligand>
        <name>Zn(2+)</name>
        <dbReference type="ChEBI" id="CHEBI:29105"/>
        <label>1</label>
    </ligand>
</feature>
<feature type="binding site" evidence="1">
    <location>
        <position position="85"/>
    </location>
    <ligand>
        <name>Zn(2+)</name>
        <dbReference type="ChEBI" id="CHEBI:29105"/>
        <label>1</label>
    </ligand>
</feature>
<feature type="binding site" evidence="1">
    <location>
        <position position="88"/>
    </location>
    <ligand>
        <name>Zn(2+)</name>
        <dbReference type="ChEBI" id="CHEBI:29105"/>
        <label>1</label>
    </ligand>
</feature>
<feature type="binding site" evidence="1">
    <location>
        <position position="460"/>
    </location>
    <ligand>
        <name>Mg(2+)</name>
        <dbReference type="ChEBI" id="CHEBI:18420"/>
    </ligand>
</feature>
<feature type="binding site" evidence="1">
    <location>
        <position position="462"/>
    </location>
    <ligand>
        <name>Mg(2+)</name>
        <dbReference type="ChEBI" id="CHEBI:18420"/>
    </ligand>
</feature>
<feature type="binding site" evidence="1">
    <location>
        <position position="464"/>
    </location>
    <ligand>
        <name>Mg(2+)</name>
        <dbReference type="ChEBI" id="CHEBI:18420"/>
    </ligand>
</feature>
<feature type="binding site" evidence="1">
    <location>
        <position position="819"/>
    </location>
    <ligand>
        <name>Zn(2+)</name>
        <dbReference type="ChEBI" id="CHEBI:29105"/>
        <label>2</label>
    </ligand>
</feature>
<feature type="binding site" evidence="1">
    <location>
        <position position="893"/>
    </location>
    <ligand>
        <name>Zn(2+)</name>
        <dbReference type="ChEBI" id="CHEBI:29105"/>
        <label>2</label>
    </ligand>
</feature>
<feature type="binding site" evidence="1">
    <location>
        <position position="900"/>
    </location>
    <ligand>
        <name>Zn(2+)</name>
        <dbReference type="ChEBI" id="CHEBI:29105"/>
        <label>2</label>
    </ligand>
</feature>
<feature type="binding site" evidence="1">
    <location>
        <position position="903"/>
    </location>
    <ligand>
        <name>Zn(2+)</name>
        <dbReference type="ChEBI" id="CHEBI:29105"/>
        <label>2</label>
    </ligand>
</feature>
<protein>
    <recommendedName>
        <fullName evidence="1">DNA-directed RNA polymerase subunit beta'</fullName>
        <shortName evidence="1">RNAP subunit beta'</shortName>
        <ecNumber evidence="1">2.7.7.6</ecNumber>
    </recommendedName>
    <alternativeName>
        <fullName evidence="1">RNA polymerase subunit beta'</fullName>
    </alternativeName>
    <alternativeName>
        <fullName evidence="1">Transcriptase subunit beta'</fullName>
    </alternativeName>
</protein>
<keyword id="KW-0240">DNA-directed RNA polymerase</keyword>
<keyword id="KW-0460">Magnesium</keyword>
<keyword id="KW-0479">Metal-binding</keyword>
<keyword id="KW-0548">Nucleotidyltransferase</keyword>
<keyword id="KW-0804">Transcription</keyword>
<keyword id="KW-0808">Transferase</keyword>
<keyword id="KW-0862">Zinc</keyword>
<gene>
    <name evidence="1" type="primary">rpoC</name>
    <name type="ordered locus">BMA10229_A1915</name>
</gene>
<dbReference type="EC" id="2.7.7.6" evidence="1"/>
<dbReference type="EMBL" id="CP000546">
    <property type="protein sequence ID" value="ABN00895.1"/>
    <property type="molecule type" value="Genomic_DNA"/>
</dbReference>
<dbReference type="RefSeq" id="WP_004198364.1">
    <property type="nucleotide sequence ID" value="NC_008836.1"/>
</dbReference>
<dbReference type="SMR" id="A2S7G7"/>
<dbReference type="GeneID" id="92980327"/>
<dbReference type="KEGG" id="bml:BMA10229_A1915"/>
<dbReference type="HOGENOM" id="CLU_000524_3_1_4"/>
<dbReference type="Proteomes" id="UP000002283">
    <property type="component" value="Chromosome I"/>
</dbReference>
<dbReference type="GO" id="GO:0000428">
    <property type="term" value="C:DNA-directed RNA polymerase complex"/>
    <property type="evidence" value="ECO:0007669"/>
    <property type="project" value="UniProtKB-KW"/>
</dbReference>
<dbReference type="GO" id="GO:0003677">
    <property type="term" value="F:DNA binding"/>
    <property type="evidence" value="ECO:0007669"/>
    <property type="project" value="UniProtKB-UniRule"/>
</dbReference>
<dbReference type="GO" id="GO:0003899">
    <property type="term" value="F:DNA-directed RNA polymerase activity"/>
    <property type="evidence" value="ECO:0007669"/>
    <property type="project" value="UniProtKB-UniRule"/>
</dbReference>
<dbReference type="GO" id="GO:0000287">
    <property type="term" value="F:magnesium ion binding"/>
    <property type="evidence" value="ECO:0007669"/>
    <property type="project" value="UniProtKB-UniRule"/>
</dbReference>
<dbReference type="GO" id="GO:0008270">
    <property type="term" value="F:zinc ion binding"/>
    <property type="evidence" value="ECO:0007669"/>
    <property type="project" value="UniProtKB-UniRule"/>
</dbReference>
<dbReference type="GO" id="GO:0006351">
    <property type="term" value="P:DNA-templated transcription"/>
    <property type="evidence" value="ECO:0007669"/>
    <property type="project" value="UniProtKB-UniRule"/>
</dbReference>
<dbReference type="CDD" id="cd02655">
    <property type="entry name" value="RNAP_beta'_C"/>
    <property type="match status" value="1"/>
</dbReference>
<dbReference type="CDD" id="cd01609">
    <property type="entry name" value="RNAP_beta'_N"/>
    <property type="match status" value="1"/>
</dbReference>
<dbReference type="FunFam" id="1.10.132.30:FF:000003">
    <property type="entry name" value="DNA-directed RNA polymerase subunit beta"/>
    <property type="match status" value="1"/>
</dbReference>
<dbReference type="FunFam" id="1.10.150.390:FF:000002">
    <property type="entry name" value="DNA-directed RNA polymerase subunit beta"/>
    <property type="match status" value="1"/>
</dbReference>
<dbReference type="FunFam" id="4.10.860.120:FF:000001">
    <property type="entry name" value="DNA-directed RNA polymerase subunit beta"/>
    <property type="match status" value="1"/>
</dbReference>
<dbReference type="Gene3D" id="1.10.132.30">
    <property type="match status" value="1"/>
</dbReference>
<dbReference type="Gene3D" id="1.10.150.390">
    <property type="match status" value="1"/>
</dbReference>
<dbReference type="Gene3D" id="1.10.1790.20">
    <property type="match status" value="1"/>
</dbReference>
<dbReference type="Gene3D" id="1.10.40.90">
    <property type="match status" value="1"/>
</dbReference>
<dbReference type="Gene3D" id="2.40.40.20">
    <property type="match status" value="1"/>
</dbReference>
<dbReference type="Gene3D" id="2.40.50.100">
    <property type="match status" value="3"/>
</dbReference>
<dbReference type="Gene3D" id="4.10.860.120">
    <property type="entry name" value="RNA polymerase II, clamp domain"/>
    <property type="match status" value="1"/>
</dbReference>
<dbReference type="Gene3D" id="1.10.274.100">
    <property type="entry name" value="RNA polymerase Rpb1, domain 3"/>
    <property type="match status" value="1"/>
</dbReference>
<dbReference type="HAMAP" id="MF_01322">
    <property type="entry name" value="RNApol_bact_RpoC"/>
    <property type="match status" value="1"/>
</dbReference>
<dbReference type="InterPro" id="IPR045867">
    <property type="entry name" value="DNA-dir_RpoC_beta_prime"/>
</dbReference>
<dbReference type="InterPro" id="IPR012754">
    <property type="entry name" value="DNA-dir_RpoC_beta_prime_bact"/>
</dbReference>
<dbReference type="InterPro" id="IPR000722">
    <property type="entry name" value="RNA_pol_asu"/>
</dbReference>
<dbReference type="InterPro" id="IPR006592">
    <property type="entry name" value="RNA_pol_N"/>
</dbReference>
<dbReference type="InterPro" id="IPR007080">
    <property type="entry name" value="RNA_pol_Rpb1_1"/>
</dbReference>
<dbReference type="InterPro" id="IPR007066">
    <property type="entry name" value="RNA_pol_Rpb1_3"/>
</dbReference>
<dbReference type="InterPro" id="IPR042102">
    <property type="entry name" value="RNA_pol_Rpb1_3_sf"/>
</dbReference>
<dbReference type="InterPro" id="IPR007083">
    <property type="entry name" value="RNA_pol_Rpb1_4"/>
</dbReference>
<dbReference type="InterPro" id="IPR007081">
    <property type="entry name" value="RNA_pol_Rpb1_5"/>
</dbReference>
<dbReference type="InterPro" id="IPR044893">
    <property type="entry name" value="RNA_pol_Rpb1_clamp_domain"/>
</dbReference>
<dbReference type="InterPro" id="IPR038120">
    <property type="entry name" value="Rpb1_funnel_sf"/>
</dbReference>
<dbReference type="NCBIfam" id="TIGR02386">
    <property type="entry name" value="rpoC_TIGR"/>
    <property type="match status" value="1"/>
</dbReference>
<dbReference type="PANTHER" id="PTHR19376">
    <property type="entry name" value="DNA-DIRECTED RNA POLYMERASE"/>
    <property type="match status" value="1"/>
</dbReference>
<dbReference type="PANTHER" id="PTHR19376:SF54">
    <property type="entry name" value="DNA-DIRECTED RNA POLYMERASE SUBUNIT BETA"/>
    <property type="match status" value="1"/>
</dbReference>
<dbReference type="Pfam" id="PF04997">
    <property type="entry name" value="RNA_pol_Rpb1_1"/>
    <property type="match status" value="1"/>
</dbReference>
<dbReference type="Pfam" id="PF00623">
    <property type="entry name" value="RNA_pol_Rpb1_2"/>
    <property type="match status" value="2"/>
</dbReference>
<dbReference type="Pfam" id="PF04983">
    <property type="entry name" value="RNA_pol_Rpb1_3"/>
    <property type="match status" value="1"/>
</dbReference>
<dbReference type="Pfam" id="PF05000">
    <property type="entry name" value="RNA_pol_Rpb1_4"/>
    <property type="match status" value="1"/>
</dbReference>
<dbReference type="Pfam" id="PF04998">
    <property type="entry name" value="RNA_pol_Rpb1_5"/>
    <property type="match status" value="1"/>
</dbReference>
<dbReference type="SMART" id="SM00663">
    <property type="entry name" value="RPOLA_N"/>
    <property type="match status" value="1"/>
</dbReference>
<dbReference type="SUPFAM" id="SSF64484">
    <property type="entry name" value="beta and beta-prime subunits of DNA dependent RNA-polymerase"/>
    <property type="match status" value="1"/>
</dbReference>
<proteinExistence type="inferred from homology"/>